<dbReference type="EC" id="1.2.1.13"/>
<dbReference type="Proteomes" id="UP000694918">
    <property type="component" value="Unplaced"/>
</dbReference>
<dbReference type="GO" id="GO:0047100">
    <property type="term" value="F:glyceraldehyde-3-phosphate dehydrogenase (NADP+) (phosphorylating) activity"/>
    <property type="evidence" value="ECO:0007669"/>
    <property type="project" value="UniProtKB-EC"/>
</dbReference>
<keyword id="KW-0903">Direct protein sequencing</keyword>
<keyword id="KW-0521">NADP</keyword>
<keyword id="KW-0560">Oxidoreductase</keyword>
<keyword id="KW-1185">Reference proteome</keyword>
<protein>
    <recommendedName>
        <fullName>Glyceraldehyde-3-phosphate dehydrogenase B</fullName>
        <ecNumber>1.2.1.13</ecNumber>
    </recommendedName>
    <alternativeName>
        <fullName>NADP-dependent glyceraldehydephosphate dehydrogenase subunit B</fullName>
    </alternativeName>
</protein>
<proteinExistence type="evidence at protein level"/>
<feature type="chain" id="PRO_0000145615" description="Glyceraldehyde-3-phosphate dehydrogenase B">
    <location>
        <begin position="1" status="less than"/>
        <end position="10" status="greater than"/>
    </location>
</feature>
<feature type="non-terminal residue">
    <location>
        <position position="1"/>
    </location>
</feature>
<feature type="non-terminal residue">
    <location>
        <position position="10"/>
    </location>
</feature>
<organism>
    <name type="scientific">Populus euphratica</name>
    <name type="common">Euphrates poplar</name>
    <dbReference type="NCBI Taxonomy" id="75702"/>
    <lineage>
        <taxon>Eukaryota</taxon>
        <taxon>Viridiplantae</taxon>
        <taxon>Streptophyta</taxon>
        <taxon>Embryophyta</taxon>
        <taxon>Tracheophyta</taxon>
        <taxon>Spermatophyta</taxon>
        <taxon>Magnoliopsida</taxon>
        <taxon>eudicotyledons</taxon>
        <taxon>Gunneridae</taxon>
        <taxon>Pentapetalae</taxon>
        <taxon>rosids</taxon>
        <taxon>fabids</taxon>
        <taxon>Malpighiales</taxon>
        <taxon>Salicaceae</taxon>
        <taxon>Saliceae</taxon>
        <taxon>Populus</taxon>
    </lineage>
</organism>
<comment type="catalytic activity">
    <reaction evidence="1">
        <text>D-glyceraldehyde 3-phosphate + phosphate + NADP(+) = (2R)-3-phospho-glyceroyl phosphate + NADPH + H(+)</text>
        <dbReference type="Rhea" id="RHEA:10296"/>
        <dbReference type="ChEBI" id="CHEBI:15378"/>
        <dbReference type="ChEBI" id="CHEBI:43474"/>
        <dbReference type="ChEBI" id="CHEBI:57604"/>
        <dbReference type="ChEBI" id="CHEBI:57783"/>
        <dbReference type="ChEBI" id="CHEBI:58349"/>
        <dbReference type="ChEBI" id="CHEBI:59776"/>
        <dbReference type="EC" id="1.2.1.13"/>
    </reaction>
</comment>
<comment type="subunit">
    <text evidence="1">Tetramer of either four A chains (GAPDH 2) or two A and two B chains (GAPDH 1).</text>
</comment>
<comment type="similarity">
    <text evidence="2">Belongs to the glyceraldehyde-3-phosphate dehydrogenase family.</text>
</comment>
<sequence length="10" mass="1067">AVSLVLPQLK</sequence>
<accession>P84544</accession>
<reference key="1">
    <citation type="journal article" date="2006" name="Ann. Bot.">
        <title>Proteome profiling of Populus euphratica Oliv. upon heat stress.</title>
        <authorList>
            <person name="Ferreira S."/>
            <person name="Hjernoe K."/>
            <person name="Larsen M."/>
            <person name="Wingsle G."/>
            <person name="Larsen P."/>
            <person name="Fey S."/>
            <person name="Roepstorff P."/>
            <person name="Pais M.S."/>
        </authorList>
    </citation>
    <scope>PROTEIN SEQUENCE</scope>
    <source>
        <tissue>Leaf</tissue>
    </source>
</reference>
<name>G3PB_POPEU</name>
<evidence type="ECO:0000250" key="1">
    <source>
        <dbReference type="UniProtKB" id="P12860"/>
    </source>
</evidence>
<evidence type="ECO:0000255" key="2"/>